<gene>
    <name type="primary">gerPB</name>
    <name type="ordered locus">BC_1144</name>
</gene>
<accession>P0A3T6</accession>
<accession>O68684</accession>
<dbReference type="EMBL" id="AE016877">
    <property type="protein sequence ID" value="AAP08131.1"/>
    <property type="molecule type" value="Genomic_DNA"/>
</dbReference>
<dbReference type="RefSeq" id="NP_830930.1">
    <property type="nucleotide sequence ID" value="NC_004722.1"/>
</dbReference>
<dbReference type="RefSeq" id="WP_001012508.1">
    <property type="nucleotide sequence ID" value="NZ_CP138336.1"/>
</dbReference>
<dbReference type="STRING" id="226900.BC_1144"/>
<dbReference type="GeneID" id="93009895"/>
<dbReference type="KEGG" id="bce:BC1144"/>
<dbReference type="PATRIC" id="fig|226900.8.peg.1107"/>
<dbReference type="HOGENOM" id="CLU_196529_0_0_9"/>
<dbReference type="OrthoDB" id="2971631at2"/>
<dbReference type="Proteomes" id="UP000001417">
    <property type="component" value="Chromosome"/>
</dbReference>
<dbReference type="GO" id="GO:0030435">
    <property type="term" value="P:sporulation resulting in formation of a cellular spore"/>
    <property type="evidence" value="ECO:0007669"/>
    <property type="project" value="UniProtKB-KW"/>
</dbReference>
<dbReference type="InterPro" id="IPR024255">
    <property type="entry name" value="GerPB"/>
</dbReference>
<dbReference type="Pfam" id="PF10803">
    <property type="entry name" value="GerPB"/>
    <property type="match status" value="1"/>
</dbReference>
<evidence type="ECO:0000250" key="1"/>
<organism>
    <name type="scientific">Bacillus cereus (strain ATCC 14579 / DSM 31 / CCUG 7414 / JCM 2152 / NBRC 15305 / NCIMB 9373 / NCTC 2599 / NRRL B-3711)</name>
    <dbReference type="NCBI Taxonomy" id="226900"/>
    <lineage>
        <taxon>Bacteria</taxon>
        <taxon>Bacillati</taxon>
        <taxon>Bacillota</taxon>
        <taxon>Bacilli</taxon>
        <taxon>Bacillales</taxon>
        <taxon>Bacillaceae</taxon>
        <taxon>Bacillus</taxon>
        <taxon>Bacillus cereus group</taxon>
    </lineage>
</organism>
<comment type="function">
    <text evidence="1">Required for the formation of functionally normal spores. Could be involved in the establishment of normal spore coat structure and/or permeability, which allows the access of germinants to their receptor (By similarity).</text>
</comment>
<keyword id="KW-0309">Germination</keyword>
<keyword id="KW-1185">Reference proteome</keyword>
<keyword id="KW-0749">Sporulation</keyword>
<proteinExistence type="inferred from homology"/>
<sequence>MNFYVNQSIIINSIKIDSITTSSVFQIGTAGSIKALSKFSNTGGFTEPLRPLQAKGQIISIKPSTSSS</sequence>
<feature type="chain" id="PRO_0000087467" description="Probable spore germination protein GerPB">
    <location>
        <begin position="1"/>
        <end position="68"/>
    </location>
</feature>
<protein>
    <recommendedName>
        <fullName>Probable spore germination protein GerPB</fullName>
    </recommendedName>
</protein>
<reference key="1">
    <citation type="journal article" date="2003" name="Nature">
        <title>Genome sequence of Bacillus cereus and comparative analysis with Bacillus anthracis.</title>
        <authorList>
            <person name="Ivanova N."/>
            <person name="Sorokin A."/>
            <person name="Anderson I."/>
            <person name="Galleron N."/>
            <person name="Candelon B."/>
            <person name="Kapatral V."/>
            <person name="Bhattacharyya A."/>
            <person name="Reznik G."/>
            <person name="Mikhailova N."/>
            <person name="Lapidus A."/>
            <person name="Chu L."/>
            <person name="Mazur M."/>
            <person name="Goltsman E."/>
            <person name="Larsen N."/>
            <person name="D'Souza M."/>
            <person name="Walunas T."/>
            <person name="Grechkin Y."/>
            <person name="Pusch G."/>
            <person name="Haselkorn R."/>
            <person name="Fonstein M."/>
            <person name="Ehrlich S.D."/>
            <person name="Overbeek R."/>
            <person name="Kyrpides N.C."/>
        </authorList>
    </citation>
    <scope>NUCLEOTIDE SEQUENCE [LARGE SCALE GENOMIC DNA]</scope>
    <source>
        <strain>ATCC 14579 / DSM 31 / CCUG 7414 / JCM 2152 / NBRC 15305 / NCIMB 9373 / NCTC 2599 / NRRL B-3711</strain>
    </source>
</reference>
<name>GERPB_BACCR</name>